<reference key="1">
    <citation type="journal article" date="2000" name="Nature">
        <title>The genome sequence of the thermoacidophilic scavenger Thermoplasma acidophilum.</title>
        <authorList>
            <person name="Ruepp A."/>
            <person name="Graml W."/>
            <person name="Santos-Martinez M.-L."/>
            <person name="Koretke K.K."/>
            <person name="Volker C."/>
            <person name="Mewes H.-W."/>
            <person name="Frishman D."/>
            <person name="Stocker S."/>
            <person name="Lupas A.N."/>
            <person name="Baumeister W."/>
        </authorList>
    </citation>
    <scope>NUCLEOTIDE SEQUENCE [LARGE SCALE GENOMIC DNA]</scope>
    <source>
        <strain>ATCC 25905 / DSM 1728 / JCM 9062 / NBRC 15155 / AMRC-C165</strain>
    </source>
</reference>
<gene>
    <name evidence="1" type="primary">pdxT</name>
    <name type="ordered locus">Ta0009</name>
</gene>
<organism>
    <name type="scientific">Thermoplasma acidophilum (strain ATCC 25905 / DSM 1728 / JCM 9062 / NBRC 15155 / AMRC-C165)</name>
    <dbReference type="NCBI Taxonomy" id="273075"/>
    <lineage>
        <taxon>Archaea</taxon>
        <taxon>Methanobacteriati</taxon>
        <taxon>Thermoplasmatota</taxon>
        <taxon>Thermoplasmata</taxon>
        <taxon>Thermoplasmatales</taxon>
        <taxon>Thermoplasmataceae</taxon>
        <taxon>Thermoplasma</taxon>
    </lineage>
</organism>
<evidence type="ECO:0000255" key="1">
    <source>
        <dbReference type="HAMAP-Rule" id="MF_01615"/>
    </source>
</evidence>
<sequence>MNIGVLGFQGDVQEHMDMLKKLSRKNRDLTLTHVKRVIDLEHVDALIIPGGESTTIYKLTLEYGLYDAIVKRSAEGMPIMATCAGLILVSKNTNDERVRGMGLLDVTIRRNAYGRQVMSFETDIEINGIGMFPAVFIRAPVIEDSGKTEVLGTLDGKPVIVKQGNVIGMTFHPELTGDTRLHEYFINMVRGRGGYISTADVKR</sequence>
<protein>
    <recommendedName>
        <fullName evidence="1">Pyridoxal 5'-phosphate synthase subunit PdxT</fullName>
        <ecNumber evidence="1">4.3.3.6</ecNumber>
    </recommendedName>
    <alternativeName>
        <fullName evidence="1">Pdx2</fullName>
    </alternativeName>
    <alternativeName>
        <fullName evidence="1">Pyridoxal 5'-phosphate synthase glutaminase subunit</fullName>
        <ecNumber evidence="1">3.5.1.2</ecNumber>
    </alternativeName>
</protein>
<keyword id="KW-0315">Glutamine amidotransferase</keyword>
<keyword id="KW-0378">Hydrolase</keyword>
<keyword id="KW-0456">Lyase</keyword>
<keyword id="KW-0663">Pyridoxal phosphate</keyword>
<keyword id="KW-1185">Reference proteome</keyword>
<proteinExistence type="inferred from homology"/>
<accession>Q9HM60</accession>
<feature type="chain" id="PRO_0000135694" description="Pyridoxal 5'-phosphate synthase subunit PdxT">
    <location>
        <begin position="1"/>
        <end position="203"/>
    </location>
</feature>
<feature type="active site" description="Nucleophile" evidence="1">
    <location>
        <position position="83"/>
    </location>
</feature>
<feature type="active site" description="Charge relay system" evidence="1">
    <location>
        <position position="172"/>
    </location>
</feature>
<feature type="active site" description="Charge relay system" evidence="1">
    <location>
        <position position="174"/>
    </location>
</feature>
<feature type="binding site" evidence="1">
    <location>
        <begin position="51"/>
        <end position="53"/>
    </location>
    <ligand>
        <name>L-glutamine</name>
        <dbReference type="ChEBI" id="CHEBI:58359"/>
    </ligand>
</feature>
<feature type="binding site" evidence="1">
    <location>
        <position position="110"/>
    </location>
    <ligand>
        <name>L-glutamine</name>
        <dbReference type="ChEBI" id="CHEBI:58359"/>
    </ligand>
</feature>
<feature type="binding site" evidence="1">
    <location>
        <begin position="137"/>
        <end position="138"/>
    </location>
    <ligand>
        <name>L-glutamine</name>
        <dbReference type="ChEBI" id="CHEBI:58359"/>
    </ligand>
</feature>
<comment type="function">
    <text evidence="1">Catalyzes the hydrolysis of glutamine to glutamate and ammonia as part of the biosynthesis of pyridoxal 5'-phosphate. The resulting ammonia molecule is channeled to the active site of PdxS.</text>
</comment>
<comment type="catalytic activity">
    <reaction evidence="1">
        <text>aldehydo-D-ribose 5-phosphate + D-glyceraldehyde 3-phosphate + L-glutamine = pyridoxal 5'-phosphate + L-glutamate + phosphate + 3 H2O + H(+)</text>
        <dbReference type="Rhea" id="RHEA:31507"/>
        <dbReference type="ChEBI" id="CHEBI:15377"/>
        <dbReference type="ChEBI" id="CHEBI:15378"/>
        <dbReference type="ChEBI" id="CHEBI:29985"/>
        <dbReference type="ChEBI" id="CHEBI:43474"/>
        <dbReference type="ChEBI" id="CHEBI:58273"/>
        <dbReference type="ChEBI" id="CHEBI:58359"/>
        <dbReference type="ChEBI" id="CHEBI:59776"/>
        <dbReference type="ChEBI" id="CHEBI:597326"/>
        <dbReference type="EC" id="4.3.3.6"/>
    </reaction>
</comment>
<comment type="catalytic activity">
    <reaction evidence="1">
        <text>L-glutamine + H2O = L-glutamate + NH4(+)</text>
        <dbReference type="Rhea" id="RHEA:15889"/>
        <dbReference type="ChEBI" id="CHEBI:15377"/>
        <dbReference type="ChEBI" id="CHEBI:28938"/>
        <dbReference type="ChEBI" id="CHEBI:29985"/>
        <dbReference type="ChEBI" id="CHEBI:58359"/>
        <dbReference type="EC" id="3.5.1.2"/>
    </reaction>
</comment>
<comment type="pathway">
    <text evidence="1">Cofactor biosynthesis; pyridoxal 5'-phosphate biosynthesis.</text>
</comment>
<comment type="subunit">
    <text evidence="1">In the presence of PdxS, forms a dodecamer of heterodimers. Only shows activity in the heterodimer.</text>
</comment>
<comment type="similarity">
    <text evidence="1">Belongs to the glutaminase PdxT/SNO family.</text>
</comment>
<name>PDXT_THEAC</name>
<dbReference type="EC" id="4.3.3.6" evidence="1"/>
<dbReference type="EC" id="3.5.1.2" evidence="1"/>
<dbReference type="EMBL" id="AL445063">
    <property type="protein sequence ID" value="CAC11158.1"/>
    <property type="molecule type" value="Genomic_DNA"/>
</dbReference>
<dbReference type="RefSeq" id="WP_010900436.1">
    <property type="nucleotide sequence ID" value="NC_002578.1"/>
</dbReference>
<dbReference type="SMR" id="Q9HM60"/>
<dbReference type="FunCoup" id="Q9HM60">
    <property type="interactions" value="71"/>
</dbReference>
<dbReference type="STRING" id="273075.gene:9571224"/>
<dbReference type="PaxDb" id="273075-Ta0009"/>
<dbReference type="EnsemblBacteria" id="CAC11158">
    <property type="protein sequence ID" value="CAC11158"/>
    <property type="gene ID" value="CAC11158"/>
</dbReference>
<dbReference type="KEGG" id="tac:Ta0009"/>
<dbReference type="eggNOG" id="arCOG00034">
    <property type="taxonomic scope" value="Archaea"/>
</dbReference>
<dbReference type="HOGENOM" id="CLU_069674_2_0_2"/>
<dbReference type="InParanoid" id="Q9HM60"/>
<dbReference type="OrthoDB" id="26717at2157"/>
<dbReference type="UniPathway" id="UPA00245"/>
<dbReference type="Proteomes" id="UP000001024">
    <property type="component" value="Chromosome"/>
</dbReference>
<dbReference type="GO" id="GO:0005829">
    <property type="term" value="C:cytosol"/>
    <property type="evidence" value="ECO:0007669"/>
    <property type="project" value="TreeGrafter"/>
</dbReference>
<dbReference type="GO" id="GO:1903600">
    <property type="term" value="C:glutaminase complex"/>
    <property type="evidence" value="ECO:0007669"/>
    <property type="project" value="TreeGrafter"/>
</dbReference>
<dbReference type="GO" id="GO:0004359">
    <property type="term" value="F:glutaminase activity"/>
    <property type="evidence" value="ECO:0007669"/>
    <property type="project" value="UniProtKB-UniRule"/>
</dbReference>
<dbReference type="GO" id="GO:0036381">
    <property type="term" value="F:pyridoxal 5'-phosphate synthase (glutamine hydrolysing) activity"/>
    <property type="evidence" value="ECO:0007669"/>
    <property type="project" value="UniProtKB-UniRule"/>
</dbReference>
<dbReference type="GO" id="GO:0006543">
    <property type="term" value="P:glutamine catabolic process"/>
    <property type="evidence" value="ECO:0007669"/>
    <property type="project" value="UniProtKB-UniRule"/>
</dbReference>
<dbReference type="GO" id="GO:0042823">
    <property type="term" value="P:pyridoxal phosphate biosynthetic process"/>
    <property type="evidence" value="ECO:0007669"/>
    <property type="project" value="UniProtKB-UniRule"/>
</dbReference>
<dbReference type="GO" id="GO:0008614">
    <property type="term" value="P:pyridoxine metabolic process"/>
    <property type="evidence" value="ECO:0007669"/>
    <property type="project" value="TreeGrafter"/>
</dbReference>
<dbReference type="CDD" id="cd01749">
    <property type="entry name" value="GATase1_PB"/>
    <property type="match status" value="1"/>
</dbReference>
<dbReference type="FunFam" id="3.40.50.880:FF:000010">
    <property type="entry name" value="uncharacterized protein LOC100176842 isoform X2"/>
    <property type="match status" value="1"/>
</dbReference>
<dbReference type="Gene3D" id="3.40.50.880">
    <property type="match status" value="1"/>
</dbReference>
<dbReference type="HAMAP" id="MF_01615">
    <property type="entry name" value="PdxT"/>
    <property type="match status" value="1"/>
</dbReference>
<dbReference type="InterPro" id="IPR029062">
    <property type="entry name" value="Class_I_gatase-like"/>
</dbReference>
<dbReference type="InterPro" id="IPR002161">
    <property type="entry name" value="PdxT/SNO"/>
</dbReference>
<dbReference type="InterPro" id="IPR021196">
    <property type="entry name" value="PdxT/SNO_CS"/>
</dbReference>
<dbReference type="NCBIfam" id="TIGR03800">
    <property type="entry name" value="PLP_synth_Pdx2"/>
    <property type="match status" value="1"/>
</dbReference>
<dbReference type="PANTHER" id="PTHR31559">
    <property type="entry name" value="PYRIDOXAL 5'-PHOSPHATE SYNTHASE SUBUNIT SNO"/>
    <property type="match status" value="1"/>
</dbReference>
<dbReference type="PANTHER" id="PTHR31559:SF0">
    <property type="entry name" value="PYRIDOXAL 5'-PHOSPHATE SYNTHASE SUBUNIT SNO1-RELATED"/>
    <property type="match status" value="1"/>
</dbReference>
<dbReference type="Pfam" id="PF01174">
    <property type="entry name" value="SNO"/>
    <property type="match status" value="1"/>
</dbReference>
<dbReference type="PIRSF" id="PIRSF005639">
    <property type="entry name" value="Glut_amidoT_SNO"/>
    <property type="match status" value="1"/>
</dbReference>
<dbReference type="SUPFAM" id="SSF52317">
    <property type="entry name" value="Class I glutamine amidotransferase-like"/>
    <property type="match status" value="1"/>
</dbReference>
<dbReference type="PROSITE" id="PS01236">
    <property type="entry name" value="PDXT_SNO_1"/>
    <property type="match status" value="1"/>
</dbReference>
<dbReference type="PROSITE" id="PS51130">
    <property type="entry name" value="PDXT_SNO_2"/>
    <property type="match status" value="1"/>
</dbReference>